<keyword id="KW-0028">Amino-acid biosynthesis</keyword>
<keyword id="KW-0223">Dioxygenase</keyword>
<keyword id="KW-0408">Iron</keyword>
<keyword id="KW-0479">Metal-binding</keyword>
<keyword id="KW-0486">Methionine biosynthesis</keyword>
<keyword id="KW-0533">Nickel</keyword>
<keyword id="KW-0560">Oxidoreductase</keyword>
<sequence length="170" mass="19738">MAQIRIHEENTRIENEVEVSNFLQGEDVLYEKWNISKLPTHLKENYSLTDENKAEILTLFSKEIADVSERRGYKAYDVVSLSNSTPNLDELLINFQKEHHHTDDEVRFIVSGHGIFAIEGKDGRFFDVELEPGDLISVPENARHYFTLQDDRQVVAIRIFVTTEGWVPIY</sequence>
<feature type="chain" id="PRO_0000359181" description="Acireductone dioxygenase">
    <location>
        <begin position="1"/>
        <end position="170"/>
    </location>
</feature>
<feature type="binding site" evidence="1">
    <location>
        <position position="99"/>
    </location>
    <ligand>
        <name>Fe(2+)</name>
        <dbReference type="ChEBI" id="CHEBI:29033"/>
    </ligand>
</feature>
<feature type="binding site" evidence="1">
    <location>
        <position position="99"/>
    </location>
    <ligand>
        <name>Ni(2+)</name>
        <dbReference type="ChEBI" id="CHEBI:49786"/>
    </ligand>
</feature>
<feature type="binding site" evidence="1">
    <location>
        <position position="101"/>
    </location>
    <ligand>
        <name>Fe(2+)</name>
        <dbReference type="ChEBI" id="CHEBI:29033"/>
    </ligand>
</feature>
<feature type="binding site" evidence="1">
    <location>
        <position position="101"/>
    </location>
    <ligand>
        <name>Ni(2+)</name>
        <dbReference type="ChEBI" id="CHEBI:49786"/>
    </ligand>
</feature>
<feature type="binding site" evidence="1">
    <location>
        <position position="105"/>
    </location>
    <ligand>
        <name>Fe(2+)</name>
        <dbReference type="ChEBI" id="CHEBI:29033"/>
    </ligand>
</feature>
<feature type="binding site" evidence="1">
    <location>
        <position position="105"/>
    </location>
    <ligand>
        <name>Ni(2+)</name>
        <dbReference type="ChEBI" id="CHEBI:49786"/>
    </ligand>
</feature>
<feature type="binding site" evidence="1">
    <location>
        <position position="144"/>
    </location>
    <ligand>
        <name>Fe(2+)</name>
        <dbReference type="ChEBI" id="CHEBI:29033"/>
    </ligand>
</feature>
<feature type="binding site" evidence="1">
    <location>
        <position position="144"/>
    </location>
    <ligand>
        <name>Ni(2+)</name>
        <dbReference type="ChEBI" id="CHEBI:49786"/>
    </ligand>
</feature>
<feature type="site" description="May play a role in metal incorporation in vivo" evidence="1">
    <location>
        <position position="98"/>
    </location>
</feature>
<feature type="site" description="May play a role in transmitting local conformational changes" evidence="1">
    <location>
        <position position="104"/>
    </location>
</feature>
<feature type="site" description="Important to generate the dianion" evidence="1">
    <location>
        <position position="107"/>
    </location>
</feature>
<evidence type="ECO:0000255" key="1">
    <source>
        <dbReference type="HAMAP-Rule" id="MF_01682"/>
    </source>
</evidence>
<comment type="function">
    <text evidence="1">Catalyzes 2 different reactions between oxygen and the acireductone 1,2-dihydroxy-3-keto-5-methylthiopentene (DHK-MTPene) depending upon the metal bound in the active site. Fe-containing acireductone dioxygenase (Fe-ARD) produces formate and 2-keto-4-methylthiobutyrate (KMTB), the alpha-ketoacid precursor of methionine in the methionine recycle pathway. Ni-containing acireductone dioxygenase (Ni-ARD) produces methylthiopropionate, carbon monoxide and formate, and does not lie on the methionine recycle pathway.</text>
</comment>
<comment type="catalytic activity">
    <reaction evidence="1">
        <text>1,2-dihydroxy-5-(methylsulfanyl)pent-1-en-3-one + O2 = 3-(methylsulfanyl)propanoate + CO + formate + 2 H(+)</text>
        <dbReference type="Rhea" id="RHEA:14161"/>
        <dbReference type="ChEBI" id="CHEBI:15378"/>
        <dbReference type="ChEBI" id="CHEBI:15379"/>
        <dbReference type="ChEBI" id="CHEBI:15740"/>
        <dbReference type="ChEBI" id="CHEBI:17245"/>
        <dbReference type="ChEBI" id="CHEBI:49016"/>
        <dbReference type="ChEBI" id="CHEBI:49252"/>
        <dbReference type="EC" id="1.13.11.53"/>
    </reaction>
</comment>
<comment type="catalytic activity">
    <reaction evidence="1">
        <text>1,2-dihydroxy-5-(methylsulfanyl)pent-1-en-3-one + O2 = 4-methylsulfanyl-2-oxobutanoate + formate + 2 H(+)</text>
        <dbReference type="Rhea" id="RHEA:24504"/>
        <dbReference type="ChEBI" id="CHEBI:15378"/>
        <dbReference type="ChEBI" id="CHEBI:15379"/>
        <dbReference type="ChEBI" id="CHEBI:15740"/>
        <dbReference type="ChEBI" id="CHEBI:16723"/>
        <dbReference type="ChEBI" id="CHEBI:49252"/>
        <dbReference type="EC" id="1.13.11.54"/>
    </reaction>
</comment>
<comment type="cofactor">
    <cofactor evidence="1">
        <name>Fe(2+)</name>
        <dbReference type="ChEBI" id="CHEBI:29033"/>
    </cofactor>
    <text evidence="1">Binds 1 Fe(2+) cation per monomer.</text>
</comment>
<comment type="cofactor">
    <cofactor evidence="1">
        <name>Ni(2+)</name>
        <dbReference type="ChEBI" id="CHEBI:49786"/>
    </cofactor>
    <text evidence="1">Binds 1 nickel ion per monomer.</text>
</comment>
<comment type="pathway">
    <text evidence="1">Amino-acid biosynthesis; L-methionine biosynthesis via salvage pathway; L-methionine from S-methyl-5-thio-alpha-D-ribose 1-phosphate: step 5/6.</text>
</comment>
<comment type="subunit">
    <text evidence="1">Monomer.</text>
</comment>
<comment type="similarity">
    <text evidence="1">Belongs to the acireductone dioxygenase (ARD) family.</text>
</comment>
<protein>
    <recommendedName>
        <fullName evidence="1">Acireductone dioxygenase</fullName>
    </recommendedName>
    <alternativeName>
        <fullName evidence="1">1,2-dihydroxy-3-keto-5-methylthiopentene dioxygenase</fullName>
        <shortName evidence="1">DHK-MTPene dioxygenase</shortName>
    </alternativeName>
    <alternativeName>
        <fullName evidence="1">Acireductone dioxygenase (Fe(2+)-requiring)</fullName>
        <shortName evidence="1">ARD'</shortName>
        <shortName evidence="1">Fe-ARD</shortName>
        <ecNumber evidence="1">1.13.11.54</ecNumber>
    </alternativeName>
    <alternativeName>
        <fullName evidence="1">Acireductone dioxygenase (Ni(2+)-requiring)</fullName>
        <shortName evidence="1">ARD</shortName>
        <shortName evidence="1">Ni-ARD</shortName>
        <ecNumber evidence="1">1.13.11.53</ecNumber>
    </alternativeName>
</protein>
<name>MTND_BACMK</name>
<proteinExistence type="inferred from homology"/>
<gene>
    <name evidence="1" type="primary">mtnD</name>
    <name type="ordered locus">BcerKBAB4_3868</name>
</gene>
<dbReference type="EC" id="1.13.11.54" evidence="1"/>
<dbReference type="EC" id="1.13.11.53" evidence="1"/>
<dbReference type="EMBL" id="CP000903">
    <property type="protein sequence ID" value="ABY45036.1"/>
    <property type="molecule type" value="Genomic_DNA"/>
</dbReference>
<dbReference type="RefSeq" id="WP_012261638.1">
    <property type="nucleotide sequence ID" value="NC_010184.1"/>
</dbReference>
<dbReference type="SMR" id="A9VFE2"/>
<dbReference type="KEGG" id="bwe:BcerKBAB4_3868"/>
<dbReference type="eggNOG" id="COG1791">
    <property type="taxonomic scope" value="Bacteria"/>
</dbReference>
<dbReference type="HOGENOM" id="CLU_125400_0_0_9"/>
<dbReference type="UniPathway" id="UPA00904">
    <property type="reaction ID" value="UER00878"/>
</dbReference>
<dbReference type="Proteomes" id="UP000002154">
    <property type="component" value="Chromosome"/>
</dbReference>
<dbReference type="GO" id="GO:0010308">
    <property type="term" value="F:acireductone dioxygenase (Ni2+-requiring) activity"/>
    <property type="evidence" value="ECO:0007669"/>
    <property type="project" value="UniProtKB-UniRule"/>
</dbReference>
<dbReference type="GO" id="GO:0010309">
    <property type="term" value="F:acireductone dioxygenase [iron(II)-requiring] activity"/>
    <property type="evidence" value="ECO:0007669"/>
    <property type="project" value="UniProtKB-UniRule"/>
</dbReference>
<dbReference type="GO" id="GO:0005506">
    <property type="term" value="F:iron ion binding"/>
    <property type="evidence" value="ECO:0007669"/>
    <property type="project" value="UniProtKB-UniRule"/>
</dbReference>
<dbReference type="GO" id="GO:0016151">
    <property type="term" value="F:nickel cation binding"/>
    <property type="evidence" value="ECO:0007669"/>
    <property type="project" value="UniProtKB-UniRule"/>
</dbReference>
<dbReference type="GO" id="GO:0019509">
    <property type="term" value="P:L-methionine salvage from methylthioadenosine"/>
    <property type="evidence" value="ECO:0007669"/>
    <property type="project" value="UniProtKB-UniRule"/>
</dbReference>
<dbReference type="GO" id="GO:0019284">
    <property type="term" value="P:L-methionine salvage from S-adenosylmethionine"/>
    <property type="evidence" value="ECO:0007669"/>
    <property type="project" value="InterPro"/>
</dbReference>
<dbReference type="CDD" id="cd02232">
    <property type="entry name" value="cupin_ARD"/>
    <property type="match status" value="1"/>
</dbReference>
<dbReference type="FunFam" id="2.60.120.10:FF:000056">
    <property type="entry name" value="Acireductone dioxygenase"/>
    <property type="match status" value="1"/>
</dbReference>
<dbReference type="Gene3D" id="2.60.120.10">
    <property type="entry name" value="Jelly Rolls"/>
    <property type="match status" value="1"/>
</dbReference>
<dbReference type="HAMAP" id="MF_01682">
    <property type="entry name" value="Salvage_MtnD"/>
    <property type="match status" value="1"/>
</dbReference>
<dbReference type="InterPro" id="IPR004313">
    <property type="entry name" value="ARD"/>
</dbReference>
<dbReference type="InterPro" id="IPR023956">
    <property type="entry name" value="ARD_bac"/>
</dbReference>
<dbReference type="InterPro" id="IPR014710">
    <property type="entry name" value="RmlC-like_jellyroll"/>
</dbReference>
<dbReference type="InterPro" id="IPR011051">
    <property type="entry name" value="RmlC_Cupin_sf"/>
</dbReference>
<dbReference type="PANTHER" id="PTHR23418">
    <property type="entry name" value="ACIREDUCTONE DIOXYGENASE"/>
    <property type="match status" value="1"/>
</dbReference>
<dbReference type="PANTHER" id="PTHR23418:SF0">
    <property type="entry name" value="ACIREDUCTONE DIOXYGENASE"/>
    <property type="match status" value="1"/>
</dbReference>
<dbReference type="Pfam" id="PF03079">
    <property type="entry name" value="ARD"/>
    <property type="match status" value="1"/>
</dbReference>
<dbReference type="SUPFAM" id="SSF51182">
    <property type="entry name" value="RmlC-like cupins"/>
    <property type="match status" value="1"/>
</dbReference>
<accession>A9VFE2</accession>
<organism>
    <name type="scientific">Bacillus mycoides (strain KBAB4)</name>
    <name type="common">Bacillus weihenstephanensis</name>
    <dbReference type="NCBI Taxonomy" id="315730"/>
    <lineage>
        <taxon>Bacteria</taxon>
        <taxon>Bacillati</taxon>
        <taxon>Bacillota</taxon>
        <taxon>Bacilli</taxon>
        <taxon>Bacillales</taxon>
        <taxon>Bacillaceae</taxon>
        <taxon>Bacillus</taxon>
        <taxon>Bacillus cereus group</taxon>
    </lineage>
</organism>
<reference key="1">
    <citation type="journal article" date="2008" name="Chem. Biol. Interact.">
        <title>Extending the Bacillus cereus group genomics to putative food-borne pathogens of different toxicity.</title>
        <authorList>
            <person name="Lapidus A."/>
            <person name="Goltsman E."/>
            <person name="Auger S."/>
            <person name="Galleron N."/>
            <person name="Segurens B."/>
            <person name="Dossat C."/>
            <person name="Land M.L."/>
            <person name="Broussolle V."/>
            <person name="Brillard J."/>
            <person name="Guinebretiere M.-H."/>
            <person name="Sanchis V."/>
            <person name="Nguen-the C."/>
            <person name="Lereclus D."/>
            <person name="Richardson P."/>
            <person name="Wincker P."/>
            <person name="Weissenbach J."/>
            <person name="Ehrlich S.D."/>
            <person name="Sorokin A."/>
        </authorList>
    </citation>
    <scope>NUCLEOTIDE SEQUENCE [LARGE SCALE GENOMIC DNA]</scope>
    <source>
        <strain>KBAB4</strain>
    </source>
</reference>